<evidence type="ECO:0000255" key="1">
    <source>
        <dbReference type="HAMAP-Rule" id="MF_00291"/>
    </source>
</evidence>
<evidence type="ECO:0000305" key="2"/>
<comment type="similarity">
    <text evidence="1">Belongs to the universal ribosomal protein uS2 family.</text>
</comment>
<dbReference type="EMBL" id="CP000283">
    <property type="protein sequence ID" value="ABE40085.1"/>
    <property type="molecule type" value="Genomic_DNA"/>
</dbReference>
<dbReference type="SMR" id="Q136A4"/>
<dbReference type="STRING" id="316057.RPD_2857"/>
<dbReference type="KEGG" id="rpd:RPD_2857"/>
<dbReference type="eggNOG" id="COG0052">
    <property type="taxonomic scope" value="Bacteria"/>
</dbReference>
<dbReference type="HOGENOM" id="CLU_040318_2_1_5"/>
<dbReference type="BioCyc" id="RPAL316057:RPD_RS14355-MONOMER"/>
<dbReference type="Proteomes" id="UP000001818">
    <property type="component" value="Chromosome"/>
</dbReference>
<dbReference type="GO" id="GO:0022627">
    <property type="term" value="C:cytosolic small ribosomal subunit"/>
    <property type="evidence" value="ECO:0007669"/>
    <property type="project" value="TreeGrafter"/>
</dbReference>
<dbReference type="GO" id="GO:0003735">
    <property type="term" value="F:structural constituent of ribosome"/>
    <property type="evidence" value="ECO:0007669"/>
    <property type="project" value="InterPro"/>
</dbReference>
<dbReference type="GO" id="GO:0006412">
    <property type="term" value="P:translation"/>
    <property type="evidence" value="ECO:0007669"/>
    <property type="project" value="UniProtKB-UniRule"/>
</dbReference>
<dbReference type="CDD" id="cd01425">
    <property type="entry name" value="RPS2"/>
    <property type="match status" value="1"/>
</dbReference>
<dbReference type="FunFam" id="1.10.287.610:FF:000001">
    <property type="entry name" value="30S ribosomal protein S2"/>
    <property type="match status" value="1"/>
</dbReference>
<dbReference type="Gene3D" id="3.40.50.10490">
    <property type="entry name" value="Glucose-6-phosphate isomerase like protein, domain 1"/>
    <property type="match status" value="1"/>
</dbReference>
<dbReference type="Gene3D" id="1.10.287.610">
    <property type="entry name" value="Helix hairpin bin"/>
    <property type="match status" value="1"/>
</dbReference>
<dbReference type="HAMAP" id="MF_00291_B">
    <property type="entry name" value="Ribosomal_uS2_B"/>
    <property type="match status" value="1"/>
</dbReference>
<dbReference type="InterPro" id="IPR001865">
    <property type="entry name" value="Ribosomal_uS2"/>
</dbReference>
<dbReference type="InterPro" id="IPR005706">
    <property type="entry name" value="Ribosomal_uS2_bac/mit/plastid"/>
</dbReference>
<dbReference type="InterPro" id="IPR018130">
    <property type="entry name" value="Ribosomal_uS2_CS"/>
</dbReference>
<dbReference type="InterPro" id="IPR023591">
    <property type="entry name" value="Ribosomal_uS2_flav_dom_sf"/>
</dbReference>
<dbReference type="NCBIfam" id="NF008966">
    <property type="entry name" value="PRK12311.1"/>
    <property type="match status" value="1"/>
</dbReference>
<dbReference type="NCBIfam" id="TIGR01011">
    <property type="entry name" value="rpsB_bact"/>
    <property type="match status" value="1"/>
</dbReference>
<dbReference type="PANTHER" id="PTHR12534">
    <property type="entry name" value="30S RIBOSOMAL PROTEIN S2 PROKARYOTIC AND ORGANELLAR"/>
    <property type="match status" value="1"/>
</dbReference>
<dbReference type="PANTHER" id="PTHR12534:SF0">
    <property type="entry name" value="SMALL RIBOSOMAL SUBUNIT PROTEIN US2M"/>
    <property type="match status" value="1"/>
</dbReference>
<dbReference type="Pfam" id="PF00318">
    <property type="entry name" value="Ribosomal_S2"/>
    <property type="match status" value="1"/>
</dbReference>
<dbReference type="PRINTS" id="PR00395">
    <property type="entry name" value="RIBOSOMALS2"/>
</dbReference>
<dbReference type="SUPFAM" id="SSF52313">
    <property type="entry name" value="Ribosomal protein S2"/>
    <property type="match status" value="1"/>
</dbReference>
<dbReference type="PROSITE" id="PS00962">
    <property type="entry name" value="RIBOSOMAL_S2_1"/>
    <property type="match status" value="1"/>
</dbReference>
<dbReference type="PROSITE" id="PS00963">
    <property type="entry name" value="RIBOSOMAL_S2_2"/>
    <property type="match status" value="1"/>
</dbReference>
<reference key="1">
    <citation type="submission" date="2006-03" db="EMBL/GenBank/DDBJ databases">
        <title>Complete sequence of Rhodopseudomonas palustris BisB5.</title>
        <authorList>
            <consortium name="US DOE Joint Genome Institute"/>
            <person name="Copeland A."/>
            <person name="Lucas S."/>
            <person name="Lapidus A."/>
            <person name="Barry K."/>
            <person name="Detter J.C."/>
            <person name="Glavina del Rio T."/>
            <person name="Hammon N."/>
            <person name="Israni S."/>
            <person name="Dalin E."/>
            <person name="Tice H."/>
            <person name="Pitluck S."/>
            <person name="Chain P."/>
            <person name="Malfatti S."/>
            <person name="Shin M."/>
            <person name="Vergez L."/>
            <person name="Schmutz J."/>
            <person name="Larimer F."/>
            <person name="Land M."/>
            <person name="Hauser L."/>
            <person name="Pelletier D.A."/>
            <person name="Kyrpides N."/>
            <person name="Lykidis A."/>
            <person name="Oda Y."/>
            <person name="Harwood C.S."/>
            <person name="Richardson P."/>
        </authorList>
    </citation>
    <scope>NUCLEOTIDE SEQUENCE [LARGE SCALE GENOMIC DNA]</scope>
    <source>
        <strain>BisB5</strain>
    </source>
</reference>
<keyword id="KW-0687">Ribonucleoprotein</keyword>
<keyword id="KW-0689">Ribosomal protein</keyword>
<accession>Q136A4</accession>
<organism>
    <name type="scientific">Rhodopseudomonas palustris (strain BisB5)</name>
    <dbReference type="NCBI Taxonomy" id="316057"/>
    <lineage>
        <taxon>Bacteria</taxon>
        <taxon>Pseudomonadati</taxon>
        <taxon>Pseudomonadota</taxon>
        <taxon>Alphaproteobacteria</taxon>
        <taxon>Hyphomicrobiales</taxon>
        <taxon>Nitrobacteraceae</taxon>
        <taxon>Rhodopseudomonas</taxon>
    </lineage>
</organism>
<feature type="chain" id="PRO_1000004049" description="Small ribosomal subunit protein uS2">
    <location>
        <begin position="1"/>
        <end position="331"/>
    </location>
</feature>
<gene>
    <name evidence="1" type="primary">rpsB</name>
    <name type="ordered locus">RPD_2857</name>
</gene>
<proteinExistence type="inferred from homology"/>
<sequence length="331" mass="36006">MAIPEFTMRQLLEAGVHFGHQSHRWNPKMAEYIFGARNNIHIIDLAQTVPLMHRALQAISDTVAKGGRVLFVGTKRQAQDAVADAAKRSAQYFVNSRWLGGTLTNWKTISGSIKRLRHLDDVLNSGDASAYTKKERLTLQRERDKLDRSLGGIKDMGGLPDLIFVIDTNKEDIAIQEAQRLGIPVAAIVDTNCDPKGITYLVPGNDDAGRAIALYCDLIARAVIDGISRAQGDSGIDIGAASRPLREDLPAAQATGFQGLSGPRGTPDDLKKLTGVSGDIEKKFNDLGIFHYWQFAELDHDTVLQIGEEVGLPGRADGWVAQAKGLTAEAE</sequence>
<name>RS2_RHOPS</name>
<protein>
    <recommendedName>
        <fullName evidence="1">Small ribosomal subunit protein uS2</fullName>
    </recommendedName>
    <alternativeName>
        <fullName evidence="2">30S ribosomal protein S2</fullName>
    </alternativeName>
</protein>